<reference key="1">
    <citation type="journal article" date="2005" name="J. Bacteriol.">
        <title>Whole-genome sequencing of Staphylococcus haemolyticus uncovers the extreme plasticity of its genome and the evolution of human-colonizing staphylococcal species.</title>
        <authorList>
            <person name="Takeuchi F."/>
            <person name="Watanabe S."/>
            <person name="Baba T."/>
            <person name="Yuzawa H."/>
            <person name="Ito T."/>
            <person name="Morimoto Y."/>
            <person name="Kuroda M."/>
            <person name="Cui L."/>
            <person name="Takahashi M."/>
            <person name="Ankai A."/>
            <person name="Baba S."/>
            <person name="Fukui S."/>
            <person name="Lee J.C."/>
            <person name="Hiramatsu K."/>
        </authorList>
    </citation>
    <scope>NUCLEOTIDE SEQUENCE [LARGE SCALE GENOMIC DNA]</scope>
    <source>
        <strain>JCSC1435</strain>
    </source>
</reference>
<gene>
    <name evidence="1" type="primary">rplK</name>
    <name type="ordered locus">SH2472</name>
</gene>
<sequence length="140" mass="14917">MAKKVEKVVKLQIPAGKANPAPPVGPALGQAGVNIMGFCKEFNARTQEQAGLIIPVEISVYEDRSFTFITKTPPAPVLLKKAAGVEKGSGEPNKTKVATVTKDQVREIAQTKMQDLNAADEEAAMRIIEGTARSMGITVQ</sequence>
<accession>Q4L3J6</accession>
<comment type="function">
    <text evidence="1">Forms part of the ribosomal stalk which helps the ribosome interact with GTP-bound translation factors.</text>
</comment>
<comment type="subunit">
    <text evidence="1">Part of the ribosomal stalk of the 50S ribosomal subunit. Interacts with L10 and the large rRNA to form the base of the stalk. L10 forms an elongated spine to which L12 dimers bind in a sequential fashion forming a multimeric L10(L12)X complex.</text>
</comment>
<comment type="PTM">
    <text evidence="1">One or more lysine residues are methylated.</text>
</comment>
<comment type="similarity">
    <text evidence="1">Belongs to the universal ribosomal protein uL11 family.</text>
</comment>
<feature type="chain" id="PRO_0000104370" description="Large ribosomal subunit protein uL11">
    <location>
        <begin position="1"/>
        <end position="140"/>
    </location>
</feature>
<proteinExistence type="inferred from homology"/>
<name>RL11_STAHJ</name>
<protein>
    <recommendedName>
        <fullName evidence="1">Large ribosomal subunit protein uL11</fullName>
    </recommendedName>
    <alternativeName>
        <fullName evidence="2">50S ribosomal protein L11</fullName>
    </alternativeName>
</protein>
<organism>
    <name type="scientific">Staphylococcus haemolyticus (strain JCSC1435)</name>
    <dbReference type="NCBI Taxonomy" id="279808"/>
    <lineage>
        <taxon>Bacteria</taxon>
        <taxon>Bacillati</taxon>
        <taxon>Bacillota</taxon>
        <taxon>Bacilli</taxon>
        <taxon>Bacillales</taxon>
        <taxon>Staphylococcaceae</taxon>
        <taxon>Staphylococcus</taxon>
    </lineage>
</organism>
<dbReference type="EMBL" id="AP006716">
    <property type="protein sequence ID" value="BAE05781.1"/>
    <property type="molecule type" value="Genomic_DNA"/>
</dbReference>
<dbReference type="RefSeq" id="WP_001832298.1">
    <property type="nucleotide sequence ID" value="NC_007168.1"/>
</dbReference>
<dbReference type="SMR" id="Q4L3J6"/>
<dbReference type="GeneID" id="93781685"/>
<dbReference type="KEGG" id="sha:SH2472"/>
<dbReference type="eggNOG" id="COG0080">
    <property type="taxonomic scope" value="Bacteria"/>
</dbReference>
<dbReference type="HOGENOM" id="CLU_074237_2_1_9"/>
<dbReference type="OrthoDB" id="9802408at2"/>
<dbReference type="Proteomes" id="UP000000543">
    <property type="component" value="Chromosome"/>
</dbReference>
<dbReference type="GO" id="GO:0022625">
    <property type="term" value="C:cytosolic large ribosomal subunit"/>
    <property type="evidence" value="ECO:0007669"/>
    <property type="project" value="TreeGrafter"/>
</dbReference>
<dbReference type="GO" id="GO:0070180">
    <property type="term" value="F:large ribosomal subunit rRNA binding"/>
    <property type="evidence" value="ECO:0007669"/>
    <property type="project" value="UniProtKB-UniRule"/>
</dbReference>
<dbReference type="GO" id="GO:0003735">
    <property type="term" value="F:structural constituent of ribosome"/>
    <property type="evidence" value="ECO:0007669"/>
    <property type="project" value="InterPro"/>
</dbReference>
<dbReference type="GO" id="GO:0006412">
    <property type="term" value="P:translation"/>
    <property type="evidence" value="ECO:0007669"/>
    <property type="project" value="UniProtKB-UniRule"/>
</dbReference>
<dbReference type="CDD" id="cd00349">
    <property type="entry name" value="Ribosomal_L11"/>
    <property type="match status" value="1"/>
</dbReference>
<dbReference type="FunFam" id="1.10.10.250:FF:000001">
    <property type="entry name" value="50S ribosomal protein L11"/>
    <property type="match status" value="1"/>
</dbReference>
<dbReference type="FunFam" id="3.30.1550.10:FF:000001">
    <property type="entry name" value="50S ribosomal protein L11"/>
    <property type="match status" value="1"/>
</dbReference>
<dbReference type="Gene3D" id="1.10.10.250">
    <property type="entry name" value="Ribosomal protein L11, C-terminal domain"/>
    <property type="match status" value="1"/>
</dbReference>
<dbReference type="Gene3D" id="3.30.1550.10">
    <property type="entry name" value="Ribosomal protein L11/L12, N-terminal domain"/>
    <property type="match status" value="1"/>
</dbReference>
<dbReference type="HAMAP" id="MF_00736">
    <property type="entry name" value="Ribosomal_uL11"/>
    <property type="match status" value="1"/>
</dbReference>
<dbReference type="InterPro" id="IPR000911">
    <property type="entry name" value="Ribosomal_uL11"/>
</dbReference>
<dbReference type="InterPro" id="IPR006519">
    <property type="entry name" value="Ribosomal_uL11_bac-typ"/>
</dbReference>
<dbReference type="InterPro" id="IPR020783">
    <property type="entry name" value="Ribosomal_uL11_C"/>
</dbReference>
<dbReference type="InterPro" id="IPR036769">
    <property type="entry name" value="Ribosomal_uL11_C_sf"/>
</dbReference>
<dbReference type="InterPro" id="IPR020784">
    <property type="entry name" value="Ribosomal_uL11_N"/>
</dbReference>
<dbReference type="InterPro" id="IPR036796">
    <property type="entry name" value="Ribosomal_uL11_N_sf"/>
</dbReference>
<dbReference type="NCBIfam" id="TIGR01632">
    <property type="entry name" value="L11_bact"/>
    <property type="match status" value="1"/>
</dbReference>
<dbReference type="PANTHER" id="PTHR11661">
    <property type="entry name" value="60S RIBOSOMAL PROTEIN L12"/>
    <property type="match status" value="1"/>
</dbReference>
<dbReference type="PANTHER" id="PTHR11661:SF1">
    <property type="entry name" value="LARGE RIBOSOMAL SUBUNIT PROTEIN UL11M"/>
    <property type="match status" value="1"/>
</dbReference>
<dbReference type="Pfam" id="PF00298">
    <property type="entry name" value="Ribosomal_L11"/>
    <property type="match status" value="1"/>
</dbReference>
<dbReference type="Pfam" id="PF03946">
    <property type="entry name" value="Ribosomal_L11_N"/>
    <property type="match status" value="1"/>
</dbReference>
<dbReference type="SMART" id="SM00649">
    <property type="entry name" value="RL11"/>
    <property type="match status" value="1"/>
</dbReference>
<dbReference type="SUPFAM" id="SSF54747">
    <property type="entry name" value="Ribosomal L11/L12e N-terminal domain"/>
    <property type="match status" value="1"/>
</dbReference>
<dbReference type="SUPFAM" id="SSF46906">
    <property type="entry name" value="Ribosomal protein L11, C-terminal domain"/>
    <property type="match status" value="1"/>
</dbReference>
<evidence type="ECO:0000255" key="1">
    <source>
        <dbReference type="HAMAP-Rule" id="MF_00736"/>
    </source>
</evidence>
<evidence type="ECO:0000305" key="2"/>
<keyword id="KW-0488">Methylation</keyword>
<keyword id="KW-0687">Ribonucleoprotein</keyword>
<keyword id="KW-0689">Ribosomal protein</keyword>
<keyword id="KW-0694">RNA-binding</keyword>
<keyword id="KW-0699">rRNA-binding</keyword>